<protein>
    <recommendedName>
        <fullName evidence="1">Magnesium-protoporphyrin IX monomethyl ester [oxidative] cyclase</fullName>
        <shortName evidence="1">Mg-protoporphyrin IX monomethyl ester oxidative cyclase</shortName>
        <ecNumber evidence="1">1.14.13.81</ecNumber>
    </recommendedName>
</protein>
<evidence type="ECO:0000255" key="1">
    <source>
        <dbReference type="HAMAP-Rule" id="MF_01840"/>
    </source>
</evidence>
<evidence type="ECO:0000256" key="2">
    <source>
        <dbReference type="SAM" id="MobiDB-lite"/>
    </source>
</evidence>
<gene>
    <name evidence="1" type="primary">acsF</name>
    <name type="ordered locus">SynRCC307_1476</name>
</gene>
<reference key="1">
    <citation type="submission" date="2006-05" db="EMBL/GenBank/DDBJ databases">
        <authorList>
            <consortium name="Genoscope"/>
        </authorList>
    </citation>
    <scope>NUCLEOTIDE SEQUENCE [LARGE SCALE GENOMIC DNA]</scope>
    <source>
        <strain>RCC307</strain>
    </source>
</reference>
<comment type="function">
    <text evidence="1">Catalyzes the formation of the isocyclic ring in chlorophyll biosynthesis. Mediates the cyclase reaction, which results in the formation of divinylprotochlorophyllide (Pchlide) characteristic of all chlorophylls from magnesium-protoporphyrin IX 13-monomethyl ester (MgPMME).</text>
</comment>
<comment type="catalytic activity">
    <reaction evidence="1">
        <text>Mg-protoporphyrin IX 13-monomethyl ester + 3 NADPH + 3 O2 + 2 H(+) = 3,8-divinyl protochlorophyllide a + 3 NADP(+) + 5 H2O</text>
        <dbReference type="Rhea" id="RHEA:33235"/>
        <dbReference type="ChEBI" id="CHEBI:15377"/>
        <dbReference type="ChEBI" id="CHEBI:15378"/>
        <dbReference type="ChEBI" id="CHEBI:15379"/>
        <dbReference type="ChEBI" id="CHEBI:57783"/>
        <dbReference type="ChEBI" id="CHEBI:58349"/>
        <dbReference type="ChEBI" id="CHEBI:58632"/>
        <dbReference type="ChEBI" id="CHEBI:60491"/>
        <dbReference type="EC" id="1.14.13.81"/>
    </reaction>
</comment>
<comment type="cofactor">
    <cofactor evidence="1">
        <name>Fe cation</name>
        <dbReference type="ChEBI" id="CHEBI:24875"/>
    </cofactor>
</comment>
<comment type="pathway">
    <text evidence="1">Porphyrin-containing compound metabolism; chlorophyll biosynthesis (light-independent).</text>
</comment>
<comment type="similarity">
    <text evidence="1">Belongs to the AcsF family.</text>
</comment>
<keyword id="KW-0149">Chlorophyll biosynthesis</keyword>
<keyword id="KW-0408">Iron</keyword>
<keyword id="KW-0479">Metal-binding</keyword>
<keyword id="KW-0521">NADP</keyword>
<keyword id="KW-0560">Oxidoreductase</keyword>
<keyword id="KW-0602">Photosynthesis</keyword>
<keyword id="KW-1185">Reference proteome</keyword>
<accession>A5GU20</accession>
<sequence length="360" mass="41621">MVPPTAIAEASRSGGEPAIKDPVKDTILTPRFYTTDFEAMAAMDLRPNQEELEAICEEFRKDYNRHHFVRNEAFDGAADKLDPETRRVFVEFLEQSCTSEFSGFLLYKELSRRIKQKNPLLAECFAHMARDEARHAGFLNKAMGDFGVQLDLGFLTANKAYTFFKPKFIFYATYLSEKIGYWRYIAIYRHLEQNPDSKIFPIFNFFENWCQDENRHGDFFDALMKAQPSSVRGLQARLWCRFFLLAVFATMYVRDVARKEFYEALGLDAREYDKYVIAKTNETSARVFPVVLNVDHPKFYERLERIVGNNNALSQADASGASAPVRLLRKLPFWGANALEMAKLFFAAPIRSENYQPAIR</sequence>
<name>ACSF_SYNR3</name>
<proteinExistence type="inferred from homology"/>
<organism>
    <name type="scientific">Synechococcus sp. (strain RCC307)</name>
    <dbReference type="NCBI Taxonomy" id="316278"/>
    <lineage>
        <taxon>Bacteria</taxon>
        <taxon>Bacillati</taxon>
        <taxon>Cyanobacteriota</taxon>
        <taxon>Cyanophyceae</taxon>
        <taxon>Synechococcales</taxon>
        <taxon>Synechococcaceae</taxon>
        <taxon>Synechococcus</taxon>
    </lineage>
</organism>
<dbReference type="EC" id="1.14.13.81" evidence="1"/>
<dbReference type="EMBL" id="CT978603">
    <property type="protein sequence ID" value="CAK28379.1"/>
    <property type="molecule type" value="Genomic_DNA"/>
</dbReference>
<dbReference type="SMR" id="A5GU20"/>
<dbReference type="STRING" id="316278.SynRCC307_1476"/>
<dbReference type="KEGG" id="syr:SynRCC307_1476"/>
<dbReference type="eggNOG" id="COG1633">
    <property type="taxonomic scope" value="Bacteria"/>
</dbReference>
<dbReference type="HOGENOM" id="CLU_048037_0_0_3"/>
<dbReference type="OrthoDB" id="141643at2"/>
<dbReference type="UniPathway" id="UPA00670"/>
<dbReference type="Proteomes" id="UP000001115">
    <property type="component" value="Chromosome"/>
</dbReference>
<dbReference type="GO" id="GO:0005506">
    <property type="term" value="F:iron ion binding"/>
    <property type="evidence" value="ECO:0007669"/>
    <property type="project" value="UniProtKB-UniRule"/>
</dbReference>
<dbReference type="GO" id="GO:0048529">
    <property type="term" value="F:magnesium-protoporphyrin IX monomethyl ester (oxidative) cyclase activity"/>
    <property type="evidence" value="ECO:0007669"/>
    <property type="project" value="UniProtKB-UniRule"/>
</dbReference>
<dbReference type="GO" id="GO:0036068">
    <property type="term" value="P:light-independent chlorophyll biosynthetic process"/>
    <property type="evidence" value="ECO:0007669"/>
    <property type="project" value="UniProtKB-UniRule"/>
</dbReference>
<dbReference type="GO" id="GO:0015979">
    <property type="term" value="P:photosynthesis"/>
    <property type="evidence" value="ECO:0007669"/>
    <property type="project" value="UniProtKB-UniRule"/>
</dbReference>
<dbReference type="CDD" id="cd01047">
    <property type="entry name" value="ACSF"/>
    <property type="match status" value="1"/>
</dbReference>
<dbReference type="Gene3D" id="1.20.1260.10">
    <property type="match status" value="1"/>
</dbReference>
<dbReference type="HAMAP" id="MF_01840">
    <property type="entry name" value="AcsF"/>
    <property type="match status" value="1"/>
</dbReference>
<dbReference type="InterPro" id="IPR008434">
    <property type="entry name" value="AcsF"/>
</dbReference>
<dbReference type="InterPro" id="IPR012347">
    <property type="entry name" value="Ferritin-like"/>
</dbReference>
<dbReference type="InterPro" id="IPR009078">
    <property type="entry name" value="Ferritin-like_SF"/>
</dbReference>
<dbReference type="InterPro" id="IPR003251">
    <property type="entry name" value="Rr_diiron-bd_dom"/>
</dbReference>
<dbReference type="NCBIfam" id="TIGR02029">
    <property type="entry name" value="AcsF"/>
    <property type="match status" value="1"/>
</dbReference>
<dbReference type="NCBIfam" id="NF010172">
    <property type="entry name" value="PRK13654.1"/>
    <property type="match status" value="1"/>
</dbReference>
<dbReference type="PANTHER" id="PTHR31053">
    <property type="entry name" value="MAGNESIUM-PROTOPORPHYRIN IX MONOMETHYL ESTER [OXIDATIVE] CYCLASE, CHLOROPLASTIC"/>
    <property type="match status" value="1"/>
</dbReference>
<dbReference type="PANTHER" id="PTHR31053:SF2">
    <property type="entry name" value="MAGNESIUM-PROTOPORPHYRIN IX MONOMETHYL ESTER [OXIDATIVE] CYCLASE, CHLOROPLASTIC"/>
    <property type="match status" value="1"/>
</dbReference>
<dbReference type="Pfam" id="PF02915">
    <property type="entry name" value="Rubrerythrin"/>
    <property type="match status" value="1"/>
</dbReference>
<dbReference type="SUPFAM" id="SSF47240">
    <property type="entry name" value="Ferritin-like"/>
    <property type="match status" value="1"/>
</dbReference>
<feature type="chain" id="PRO_1000070554" description="Magnesium-protoporphyrin IX monomethyl ester [oxidative] cyclase">
    <location>
        <begin position="1"/>
        <end position="360"/>
    </location>
</feature>
<feature type="region of interest" description="Disordered" evidence="2">
    <location>
        <begin position="1"/>
        <end position="20"/>
    </location>
</feature>